<reference key="1">
    <citation type="journal article" date="2002" name="Proc. Natl. Acad. Sci. U.S.A.">
        <title>Genome sequence of Streptococcus mutans UA159, a cariogenic dental pathogen.</title>
        <authorList>
            <person name="Ajdic D.J."/>
            <person name="McShan W.M."/>
            <person name="McLaughlin R.E."/>
            <person name="Savic G."/>
            <person name="Chang J."/>
            <person name="Carson M.B."/>
            <person name="Primeaux C."/>
            <person name="Tian R."/>
            <person name="Kenton S."/>
            <person name="Jia H.G."/>
            <person name="Lin S.P."/>
            <person name="Qian Y."/>
            <person name="Li S."/>
            <person name="Zhu H."/>
            <person name="Najar F.Z."/>
            <person name="Lai H."/>
            <person name="White J."/>
            <person name="Roe B.A."/>
            <person name="Ferretti J.J."/>
        </authorList>
    </citation>
    <scope>NUCLEOTIDE SEQUENCE [LARGE SCALE GENOMIC DNA]</scope>
    <source>
        <strain>ATCC 700610 / UA159</strain>
    </source>
</reference>
<sequence length="160" mass="17989">MTKEVTVESFELDHIAVKAPYVRLISEEFGPKGDLITNFDIRLVQPNEDSIPTAGLHTIEHLLAKLIRQRIDGMIDCSPFGCRTGFHLIMWGKHTTTQIATVIKASLEEIANTISWKDVPGTTIESCGNYKDHSLFSAKEWAKLILKQGISDDPFERHLV</sequence>
<gene>
    <name evidence="1" type="primary">luxS</name>
    <name type="ordered locus">SMU_474</name>
</gene>
<dbReference type="EC" id="4.4.1.21" evidence="1"/>
<dbReference type="EMBL" id="AE014133">
    <property type="protein sequence ID" value="AAN58222.1"/>
    <property type="molecule type" value="Genomic_DNA"/>
</dbReference>
<dbReference type="RefSeq" id="NP_720916.1">
    <property type="nucleotide sequence ID" value="NC_004350.2"/>
</dbReference>
<dbReference type="RefSeq" id="WP_002263047.1">
    <property type="nucleotide sequence ID" value="NC_004350.2"/>
</dbReference>
<dbReference type="SMR" id="Q8DVK8"/>
<dbReference type="STRING" id="210007.SMU_474"/>
<dbReference type="KEGG" id="smu:SMU_474"/>
<dbReference type="PATRIC" id="fig|210007.7.peg.416"/>
<dbReference type="eggNOG" id="COG1854">
    <property type="taxonomic scope" value="Bacteria"/>
</dbReference>
<dbReference type="HOGENOM" id="CLU_107531_2_1_9"/>
<dbReference type="OrthoDB" id="9788129at2"/>
<dbReference type="PhylomeDB" id="Q8DVK8"/>
<dbReference type="BRENDA" id="4.4.1.21">
    <property type="organism ID" value="5941"/>
</dbReference>
<dbReference type="Proteomes" id="UP000002512">
    <property type="component" value="Chromosome"/>
</dbReference>
<dbReference type="GO" id="GO:0005506">
    <property type="term" value="F:iron ion binding"/>
    <property type="evidence" value="ECO:0007669"/>
    <property type="project" value="InterPro"/>
</dbReference>
<dbReference type="GO" id="GO:0043768">
    <property type="term" value="F:S-ribosylhomocysteine lyase activity"/>
    <property type="evidence" value="ECO:0007669"/>
    <property type="project" value="UniProtKB-UniRule"/>
</dbReference>
<dbReference type="GO" id="GO:0009372">
    <property type="term" value="P:quorum sensing"/>
    <property type="evidence" value="ECO:0007669"/>
    <property type="project" value="UniProtKB-UniRule"/>
</dbReference>
<dbReference type="Gene3D" id="3.30.1360.80">
    <property type="entry name" value="S-ribosylhomocysteinase (LuxS)"/>
    <property type="match status" value="1"/>
</dbReference>
<dbReference type="HAMAP" id="MF_00091">
    <property type="entry name" value="LuxS"/>
    <property type="match status" value="1"/>
</dbReference>
<dbReference type="InterPro" id="IPR037005">
    <property type="entry name" value="LuxS_sf"/>
</dbReference>
<dbReference type="InterPro" id="IPR011249">
    <property type="entry name" value="Metalloenz_LuxS/M16"/>
</dbReference>
<dbReference type="InterPro" id="IPR003815">
    <property type="entry name" value="S-ribosylhomocysteinase"/>
</dbReference>
<dbReference type="NCBIfam" id="NF002607">
    <property type="entry name" value="PRK02260.2-5"/>
    <property type="match status" value="1"/>
</dbReference>
<dbReference type="NCBIfam" id="NF002608">
    <property type="entry name" value="PRK02260.3-1"/>
    <property type="match status" value="1"/>
</dbReference>
<dbReference type="PANTHER" id="PTHR35799">
    <property type="entry name" value="S-RIBOSYLHOMOCYSTEINE LYASE"/>
    <property type="match status" value="1"/>
</dbReference>
<dbReference type="PANTHER" id="PTHR35799:SF1">
    <property type="entry name" value="S-RIBOSYLHOMOCYSTEINE LYASE"/>
    <property type="match status" value="1"/>
</dbReference>
<dbReference type="Pfam" id="PF02664">
    <property type="entry name" value="LuxS"/>
    <property type="match status" value="1"/>
</dbReference>
<dbReference type="PIRSF" id="PIRSF006160">
    <property type="entry name" value="AI2"/>
    <property type="match status" value="1"/>
</dbReference>
<dbReference type="PRINTS" id="PR01487">
    <property type="entry name" value="LUXSPROTEIN"/>
</dbReference>
<dbReference type="SUPFAM" id="SSF63411">
    <property type="entry name" value="LuxS/MPP-like metallohydrolase"/>
    <property type="match status" value="1"/>
</dbReference>
<organism>
    <name type="scientific">Streptococcus mutans serotype c (strain ATCC 700610 / UA159)</name>
    <dbReference type="NCBI Taxonomy" id="210007"/>
    <lineage>
        <taxon>Bacteria</taxon>
        <taxon>Bacillati</taxon>
        <taxon>Bacillota</taxon>
        <taxon>Bacilli</taxon>
        <taxon>Lactobacillales</taxon>
        <taxon>Streptococcaceae</taxon>
        <taxon>Streptococcus</taxon>
    </lineage>
</organism>
<keyword id="KW-0071">Autoinducer synthesis</keyword>
<keyword id="KW-0408">Iron</keyword>
<keyword id="KW-0456">Lyase</keyword>
<keyword id="KW-0479">Metal-binding</keyword>
<keyword id="KW-0673">Quorum sensing</keyword>
<keyword id="KW-1185">Reference proteome</keyword>
<evidence type="ECO:0000255" key="1">
    <source>
        <dbReference type="HAMAP-Rule" id="MF_00091"/>
    </source>
</evidence>
<comment type="function">
    <text evidence="1">Involved in the synthesis of autoinducer 2 (AI-2) which is secreted by bacteria and is used to communicate both the cell density and the metabolic potential of the environment. The regulation of gene expression in response to changes in cell density is called quorum sensing. Catalyzes the transformation of S-ribosylhomocysteine (RHC) to homocysteine (HC) and 4,5-dihydroxy-2,3-pentadione (DPD).</text>
</comment>
<comment type="catalytic activity">
    <reaction evidence="1">
        <text>S-(5-deoxy-D-ribos-5-yl)-L-homocysteine = (S)-4,5-dihydroxypentane-2,3-dione + L-homocysteine</text>
        <dbReference type="Rhea" id="RHEA:17753"/>
        <dbReference type="ChEBI" id="CHEBI:29484"/>
        <dbReference type="ChEBI" id="CHEBI:58195"/>
        <dbReference type="ChEBI" id="CHEBI:58199"/>
        <dbReference type="EC" id="4.4.1.21"/>
    </reaction>
</comment>
<comment type="cofactor">
    <cofactor evidence="1">
        <name>Fe cation</name>
        <dbReference type="ChEBI" id="CHEBI:24875"/>
    </cofactor>
    <text evidence="1">Binds 1 Fe cation per subunit.</text>
</comment>
<comment type="subunit">
    <text evidence="1">Homodimer.</text>
</comment>
<comment type="similarity">
    <text evidence="1">Belongs to the LuxS family.</text>
</comment>
<protein>
    <recommendedName>
        <fullName evidence="1">S-ribosylhomocysteine lyase</fullName>
        <ecNumber evidence="1">4.4.1.21</ecNumber>
    </recommendedName>
    <alternativeName>
        <fullName evidence="1">AI-2 synthesis protein</fullName>
    </alternativeName>
    <alternativeName>
        <fullName evidence="1">Autoinducer-2 production protein LuxS</fullName>
    </alternativeName>
</protein>
<feature type="chain" id="PRO_0000172264" description="S-ribosylhomocysteine lyase">
    <location>
        <begin position="1"/>
        <end position="160"/>
    </location>
</feature>
<feature type="binding site" evidence="1">
    <location>
        <position position="57"/>
    </location>
    <ligand>
        <name>Fe cation</name>
        <dbReference type="ChEBI" id="CHEBI:24875"/>
    </ligand>
</feature>
<feature type="binding site" evidence="1">
    <location>
        <position position="61"/>
    </location>
    <ligand>
        <name>Fe cation</name>
        <dbReference type="ChEBI" id="CHEBI:24875"/>
    </ligand>
</feature>
<feature type="binding site" evidence="1">
    <location>
        <position position="127"/>
    </location>
    <ligand>
        <name>Fe cation</name>
        <dbReference type="ChEBI" id="CHEBI:24875"/>
    </ligand>
</feature>
<proteinExistence type="inferred from homology"/>
<accession>Q8DVK8</accession>
<name>LUXS_STRMU</name>